<protein>
    <recommendedName>
        <fullName>F-box/WD repeat-containing protein 5</fullName>
    </recommendedName>
    <alternativeName>
        <fullName>F-box and WD-40 domain-containing protein 5</fullName>
    </alternativeName>
</protein>
<feature type="chain" id="PRO_0000050992" description="F-box/WD repeat-containing protein 5">
    <location>
        <begin position="1"/>
        <end position="566"/>
    </location>
</feature>
<feature type="domain" description="F-box" evidence="3">
    <location>
        <begin position="3"/>
        <end position="49"/>
    </location>
</feature>
<feature type="repeat" description="WD 1">
    <location>
        <begin position="83"/>
        <end position="125"/>
    </location>
</feature>
<feature type="repeat" description="WD 2">
    <location>
        <begin position="126"/>
        <end position="178"/>
    </location>
</feature>
<feature type="repeat" description="WD 3">
    <location>
        <begin position="179"/>
        <end position="238"/>
    </location>
</feature>
<feature type="repeat" description="WD 4">
    <location>
        <begin position="239"/>
        <end position="281"/>
    </location>
</feature>
<feature type="repeat" description="WD 5">
    <location>
        <begin position="394"/>
        <end position="447"/>
    </location>
</feature>
<feature type="repeat" description="WD 6">
    <location>
        <begin position="458"/>
        <end position="501"/>
    </location>
</feature>
<feature type="repeat" description="WD 7">
    <location>
        <begin position="502"/>
        <end position="539"/>
    </location>
</feature>
<feature type="short sequence motif" description="D-box">
    <location>
        <begin position="303"/>
        <end position="311"/>
    </location>
</feature>
<feature type="modified residue" description="Phosphoserine; by PLK4" evidence="6">
    <location>
        <position position="151"/>
    </location>
</feature>
<feature type="modified residue" description="Phosphoserine" evidence="9">
    <location>
        <position position="284"/>
    </location>
</feature>
<feature type="splice variant" id="VSP_009479" description="In isoform 2." evidence="7">
    <original>IKQILPHQMTT</original>
    <variation>TPLPPCCPPRS</variation>
    <location>
        <begin position="367"/>
        <end position="377"/>
    </location>
</feature>
<feature type="splice variant" id="VSP_009480" description="In isoform 2." evidence="7">
    <location>
        <begin position="378"/>
        <end position="566"/>
    </location>
</feature>
<feature type="sequence variant" id="VAR_053393" description="In dbSNP:rs7850438.">
    <original>E</original>
    <variation>K</variation>
    <location>
        <position position="340"/>
    </location>
</feature>
<feature type="mutagenesis site" description="Impairs phosphorylation by PLK4 and enhances ubiquitination of SASS6." evidence="6">
    <original>S</original>
    <variation>A</variation>
    <location>
        <position position="151"/>
    </location>
</feature>
<feature type="sequence conflict" description="In Ref. 1; BAB15354." evidence="8" ref="1">
    <original>D</original>
    <variation>G</variation>
    <location>
        <position position="490"/>
    </location>
</feature>
<feature type="sequence conflict" description="In Ref. 5; BAD92963." evidence="8" ref="5">
    <original>R</original>
    <variation>Q</variation>
    <location>
        <position position="508"/>
    </location>
</feature>
<evidence type="ECO:0000250" key="1"/>
<evidence type="ECO:0000250" key="2">
    <source>
        <dbReference type="UniProtKB" id="Q9QXW2"/>
    </source>
</evidence>
<evidence type="ECO:0000255" key="3">
    <source>
        <dbReference type="PROSITE-ProRule" id="PRU00080"/>
    </source>
</evidence>
<evidence type="ECO:0000269" key="4">
    <source>
    </source>
</evidence>
<evidence type="ECO:0000269" key="5">
    <source>
    </source>
</evidence>
<evidence type="ECO:0000269" key="6">
    <source>
    </source>
</evidence>
<evidence type="ECO:0000303" key="7">
    <source>
    </source>
</evidence>
<evidence type="ECO:0000305" key="8"/>
<evidence type="ECO:0007744" key="9">
    <source>
    </source>
</evidence>
<sequence>MDEGGTPLLPDSLVYQIFLSLGPADVLAAGLVCRQWQAVSRDEFLWREQFYRYYQVARDVPRHPAAMSWYEEFQRLYDTVPCVEVQTLREHTDQVLHLSFSHSGYQFASCSKDCTVKIWSNDLTISLLHSADMRPYNWSYTQFSQFNKDDSLLLASGVFLGPHNSSSGEIAVISLDSFALLSRVRNKPYDVFGCWLTETSLISGNLHRIGDITSCSVLWLNNAFQDVESENVNVVKRLFKIQNLNASTVRTVMVADCSRFDSPDLLLEAGDPATSPCRIFDLGSDNEEVVAGPAPAHAKEGLRHFLDRVLEGRAQPQLSERMLETKVAELLAQGHTKPPERSATGAKSKYLIFTTGCLTYSPHQIGIKQILPHQMTTAGPVLGEGRGSDAFFDALDHVIDIHGHIIGMGLSPDNRYLYVNSRAWPNGAVVADPMQPPPIAEEIDLLVFDLKTMREVRRALRAHRAYTPNDECFFIFLDVSRDFVASGAEDRHGYIWDRHYNICLARLRHEDVVNSVVFSPQEQELLLTASDDATIKAWRSPRTMRVLQAPRPRPRTFFSWLASQRR</sequence>
<comment type="function">
    <text evidence="4 5 6">Substrate recognition component of both SCF (SKP1-CUL1-F-box protein) and DCX (DDB1-CUL4-X-box) E3 ubiquitin-protein ligase complexes. Substrate recognition component of the SCF(FBXW5) E3 ubiquitin-protein ligase complex which mediates the ubiquitination and subsequent proteasomal degradation of SASS6 during S phase, leading to prevent centriole reduplication. The SCF(FBXW5) complex also mediates ubiquitination and degradation of actin-regulator EPS8 during G2 phase, leading to the transient degradation of EPS8 and subsequent cell shape changes required to allow mitotic progression. Substrate-specific adapter of the DCX(FBXW5) E3 ubiquitin-protein ligase complex which mediates the polyubiquitination and subsequent degradation of TSC2. May also act as a negative regulator of MAP3K7/TAK1 signaling in the interleukin-1B (IL1B) signaling pathway.</text>
</comment>
<comment type="pathway">
    <text>Protein modification; protein ubiquitination.</text>
</comment>
<comment type="subunit">
    <text evidence="2 4 6">Part of the SCF (SKP1-CUL1-F-box) E3 ubiquitin-protein ligase complex SCF(FBXW5) composed of CUL1, SKP1, RBX1 and FBXW5. Component of the DCX(FBXW5) E3 ubiquitin ligase complex, at least composed of (CUL4A or CUL4B), DDB1, FBXW5 and RBX1. Interacts with CDC20, EPS8, TSC1, TSC2 and SASS6. Interacts with TNFAIP8L1; TNFAIP8L1 competes with TSC2 to bind FBXW5 increasing TSC2 stability by preventing its ubiquitination.</text>
</comment>
<comment type="interaction">
    <interactant intactId="EBI-741068">
        <id>Q969U6</id>
    </interactant>
    <interactant intactId="EBI-10173507">
        <id>Q6UY14-3</id>
        <label>ADAMTSL4</label>
    </interactant>
    <organismsDiffer>false</organismsDiffer>
    <experiments>6</experiments>
</comment>
<comment type="interaction">
    <interactant intactId="EBI-741068">
        <id>Q969U6</id>
    </interactant>
    <interactant intactId="EBI-3867333">
        <id>A8MQ03</id>
        <label>CYSRT1</label>
    </interactant>
    <organismsDiffer>false</organismsDiffer>
    <experiments>3</experiments>
</comment>
<comment type="interaction">
    <interactant intactId="EBI-741068">
        <id>Q969U6</id>
    </interactant>
    <interactant intactId="EBI-743414">
        <id>O95967</id>
        <label>EFEMP2</label>
    </interactant>
    <organismsDiffer>false</organismsDiffer>
    <experiments>3</experiments>
</comment>
<comment type="interaction">
    <interactant intactId="EBI-741068">
        <id>Q969U6</id>
    </interactant>
    <interactant intactId="EBI-947973">
        <id>P98095</id>
        <label>FBLN2</label>
    </interactant>
    <organismsDiffer>false</organismsDiffer>
    <experiments>3</experiments>
</comment>
<comment type="interaction">
    <interactant intactId="EBI-741068">
        <id>Q969U6</id>
    </interactant>
    <interactant intactId="EBI-948001">
        <id>Q15323</id>
        <label>KRT31</label>
    </interactant>
    <organismsDiffer>false</organismsDiffer>
    <experiments>6</experiments>
</comment>
<comment type="interaction">
    <interactant intactId="EBI-741068">
        <id>Q969U6</id>
    </interactant>
    <interactant intactId="EBI-1047093">
        <id>O76011</id>
        <label>KRT34</label>
    </interactant>
    <organismsDiffer>false</organismsDiffer>
    <experiments>5</experiments>
</comment>
<comment type="interaction">
    <interactant intactId="EBI-741068">
        <id>Q969U6</id>
    </interactant>
    <interactant intactId="EBI-1045716">
        <id>O76014</id>
        <label>KRT37</label>
    </interactant>
    <organismsDiffer>false</organismsDiffer>
    <experiments>3</experiments>
</comment>
<comment type="interaction">
    <interactant intactId="EBI-741068">
        <id>Q969U6</id>
    </interactant>
    <interactant intactId="EBI-10171697">
        <id>Q6A162</id>
        <label>KRT40</label>
    </interactant>
    <organismsDiffer>false</organismsDiffer>
    <experiments>3</experiments>
</comment>
<comment type="interaction">
    <interactant intactId="EBI-741068">
        <id>Q969U6</id>
    </interactant>
    <interactant intactId="EBI-11749135">
        <id>Q8IUG1</id>
        <label>KRTAP1-3</label>
    </interactant>
    <organismsDiffer>false</organismsDiffer>
    <experiments>3</experiments>
</comment>
<comment type="interaction">
    <interactant intactId="EBI-741068">
        <id>Q969U6</id>
    </interactant>
    <interactant intactId="EBI-10171774">
        <id>P60410</id>
        <label>KRTAP10-8</label>
    </interactant>
    <organismsDiffer>false</organismsDiffer>
    <experiments>6</experiments>
</comment>
<comment type="interaction">
    <interactant intactId="EBI-741068">
        <id>Q969U6</id>
    </interactant>
    <interactant intactId="EBI-10172052">
        <id>P60411</id>
        <label>KRTAP10-9</label>
    </interactant>
    <organismsDiffer>false</organismsDiffer>
    <experiments>3</experiments>
</comment>
<comment type="interaction">
    <interactant intactId="EBI-741068">
        <id>Q969U6</id>
    </interactant>
    <interactant intactId="EBI-11953334">
        <id>P60328</id>
        <label>KRTAP12-3</label>
    </interactant>
    <organismsDiffer>false</organismsDiffer>
    <experiments>3</experiments>
</comment>
<comment type="interaction">
    <interactant intactId="EBI-741068">
        <id>Q969U6</id>
    </interactant>
    <interactant intactId="EBI-34579671">
        <id>Q9BYQ7</id>
        <label>KRTAP4-1</label>
    </interactant>
    <organismsDiffer>false</organismsDiffer>
    <experiments>3</experiments>
</comment>
<comment type="interaction">
    <interactant intactId="EBI-741068">
        <id>Q969U6</id>
    </interactant>
    <interactant intactId="EBI-22311199">
        <id>Q3LI67</id>
        <label>KRTAP6-3</label>
    </interactant>
    <organismsDiffer>false</organismsDiffer>
    <experiments>3</experiments>
</comment>
<comment type="interaction">
    <interactant intactId="EBI-741068">
        <id>Q969U6</id>
    </interactant>
    <interactant intactId="EBI-1043191">
        <id>Q9BYQ3</id>
        <label>KRTAP9-3</label>
    </interactant>
    <organismsDiffer>false</organismsDiffer>
    <experiments>3</experiments>
</comment>
<comment type="interaction">
    <interactant intactId="EBI-741068">
        <id>Q969U6</id>
    </interactant>
    <interactant intactId="EBI-10185730">
        <id>Q9BYQ2</id>
        <label>KRTAP9-4</label>
    </interactant>
    <organismsDiffer>false</organismsDiffer>
    <experiments>3</experiments>
</comment>
<comment type="interaction">
    <interactant intactId="EBI-741068">
        <id>Q969U6</id>
    </interactant>
    <interactant intactId="EBI-10172526">
        <id>Q9UJV3-2</id>
        <label>MID2</label>
    </interactant>
    <organismsDiffer>false</organismsDiffer>
    <experiments>3</experiments>
</comment>
<comment type="interaction">
    <interactant intactId="EBI-741068">
        <id>Q969U6</id>
    </interactant>
    <interactant intactId="EBI-11522433">
        <id>Q5JR59-3</id>
        <label>MTUS2</label>
    </interactant>
    <organismsDiffer>false</organismsDiffer>
    <experiments>3</experiments>
</comment>
<comment type="interaction">
    <interactant intactId="EBI-741068">
        <id>Q969U6</id>
    </interactant>
    <interactant intactId="EBI-945833">
        <id>Q7Z3S9</id>
        <label>NOTCH2NLA</label>
    </interactant>
    <organismsDiffer>false</organismsDiffer>
    <experiments>3</experiments>
</comment>
<comment type="interaction">
    <interactant intactId="EBI-741068">
        <id>Q969U6</id>
    </interactant>
    <interactant intactId="EBI-22310682">
        <id>P0DPK4</id>
        <label>NOTCH2NLC</label>
    </interactant>
    <organismsDiffer>false</organismsDiffer>
    <experiments>3</experiments>
</comment>
<comment type="interaction">
    <interactant intactId="EBI-741068">
        <id>Q969U6</id>
    </interactant>
    <interactant intactId="EBI-742388">
        <id>Q9H8W4</id>
        <label>PLEKHF2</label>
    </interactant>
    <organismsDiffer>false</organismsDiffer>
    <experiments>3</experiments>
</comment>
<comment type="interaction">
    <interactant intactId="EBI-741068">
        <id>Q969U6</id>
    </interactant>
    <interactant intactId="EBI-307486">
        <id>P63208</id>
        <label>SKP1</label>
    </interactant>
    <organismsDiffer>false</organismsDiffer>
    <experiments>7</experiments>
</comment>
<comment type="interaction">
    <interactant intactId="EBI-741068">
        <id>Q969U6</id>
    </interactant>
    <interactant intactId="EBI-719493">
        <id>P14373</id>
        <label>TRIM27</label>
    </interactant>
    <organismsDiffer>false</organismsDiffer>
    <experiments>6</experiments>
</comment>
<comment type="interaction">
    <interactant intactId="EBI-741068">
        <id>Q969U6</id>
    </interactant>
    <interactant intactId="EBI-11957238">
        <id>Q2TAL6</id>
        <label>VWC2</label>
    </interactant>
    <organismsDiffer>false</organismsDiffer>
    <experiments>3</experiments>
</comment>
<comment type="interaction">
    <interactant intactId="EBI-16031873">
        <id>Q969U6-1</id>
    </interactant>
    <interactant intactId="EBI-350322">
        <id>Q16531</id>
        <label>DDB1</label>
    </interactant>
    <organismsDiffer>false</organismsDiffer>
    <experiments>3</experiments>
</comment>
<comment type="interaction">
    <interactant intactId="EBI-16031873">
        <id>Q969U6-1</id>
    </interactant>
    <interactant intactId="EBI-375576">
        <id>Q12929</id>
        <label>EPS8</label>
    </interactant>
    <organismsDiffer>false</organismsDiffer>
    <experiments>3</experiments>
</comment>
<comment type="interaction">
    <interactant intactId="EBI-16031873">
        <id>Q969U6-1</id>
    </interactant>
    <interactant intactId="EBI-307497">
        <id>P63208-1</id>
        <label>SKP1</label>
    </interactant>
    <organismsDiffer>false</organismsDiffer>
    <experiments>3</experiments>
</comment>
<comment type="subcellular location">
    <subcellularLocation>
        <location evidence="6">Cytoplasm</location>
    </subcellularLocation>
</comment>
<comment type="alternative products">
    <event type="alternative splicing"/>
    <isoform>
        <id>Q969U6-1</id>
        <name>1</name>
        <sequence type="displayed"/>
    </isoform>
    <isoform>
        <id>Q969U6-2</id>
        <name>2</name>
        <sequence type="described" ref="VSP_009479 VSP_009480"/>
    </isoform>
</comment>
<comment type="developmental stage">
    <text evidence="6">Degraded by the APC/C complex during G1 phase and reaccumulates at the G1/S phase transition.</text>
</comment>
<comment type="domain">
    <text evidence="8">The F-box domain mediates interaction with components of SCF (SKP1-CUL1-F-box protein) complexes, while WD repeats mediate interaction with components of DCX (DDB1-CUL4-X-box) complexes.</text>
</comment>
<comment type="domain">
    <text evidence="1">The D-box (destruction box) mediate the interaction with APC proteins, and acts as a recognition signal for degradation via the ubiquitin-proteasome pathway.</text>
</comment>
<comment type="PTM">
    <text evidence="6">Phosphorylated at Ser-151 by PLK4 during the G1/S transition, leading to inhibit its ability to ubiquitinate SASS6.</text>
</comment>
<comment type="PTM">
    <text evidence="6">Ubiquitinated and degraded by the APC/C complex during mitosis and G1 phase.</text>
</comment>
<comment type="similarity">
    <text evidence="8">Belongs to the FBXW5 family.</text>
</comment>
<comment type="sequence caution" evidence="8">
    <conflict type="frameshift">
        <sequence resource="EMBL-CDS" id="AAG17240"/>
    </conflict>
</comment>
<comment type="sequence caution" evidence="8">
    <conflict type="frameshift">
        <sequence resource="EMBL-CDS" id="AAG23772"/>
    </conflict>
</comment>
<comment type="sequence caution" evidence="8">
    <conflict type="erroneous initiation">
        <sequence resource="EMBL-CDS" id="AAH00850"/>
    </conflict>
    <text>Truncated N-terminus.</text>
</comment>
<proteinExistence type="evidence at protein level"/>
<name>FBXW5_HUMAN</name>
<dbReference type="EMBL" id="AK026081">
    <property type="protein sequence ID" value="BAB15354.1"/>
    <property type="molecule type" value="mRNA"/>
</dbReference>
<dbReference type="EMBL" id="AK315738">
    <property type="protein sequence ID" value="BAG38093.1"/>
    <property type="molecule type" value="mRNA"/>
</dbReference>
<dbReference type="EMBL" id="CH471090">
    <property type="protein sequence ID" value="EAW88307.1"/>
    <property type="molecule type" value="Genomic_DNA"/>
</dbReference>
<dbReference type="EMBL" id="BC000850">
    <property type="protein sequence ID" value="AAH00850.1"/>
    <property type="status" value="ALT_INIT"/>
    <property type="molecule type" value="mRNA"/>
</dbReference>
<dbReference type="EMBL" id="BC004541">
    <property type="protein sequence ID" value="AAH04541.2"/>
    <property type="molecule type" value="mRNA"/>
</dbReference>
<dbReference type="EMBL" id="BC009429">
    <property type="protein sequence ID" value="AAH09429.1"/>
    <property type="molecule type" value="mRNA"/>
</dbReference>
<dbReference type="EMBL" id="BC014297">
    <property type="protein sequence ID" value="AAH14297.1"/>
    <property type="molecule type" value="mRNA"/>
</dbReference>
<dbReference type="EMBL" id="AL807752">
    <property type="status" value="NOT_ANNOTATED_CDS"/>
    <property type="molecule type" value="Genomic_DNA"/>
</dbReference>
<dbReference type="EMBL" id="BC014130">
    <property type="protein sequence ID" value="AAH14130.1"/>
    <property type="molecule type" value="mRNA"/>
</dbReference>
<dbReference type="EMBL" id="AB209726">
    <property type="protein sequence ID" value="BAD92963.1"/>
    <property type="molecule type" value="mRNA"/>
</dbReference>
<dbReference type="EMBL" id="AL137631">
    <property type="protein sequence ID" value="CAB70851.1"/>
    <property type="molecule type" value="mRNA"/>
</dbReference>
<dbReference type="EMBL" id="AF217998">
    <property type="protein sequence ID" value="AAG17240.1"/>
    <property type="status" value="ALT_FRAME"/>
    <property type="molecule type" value="mRNA"/>
</dbReference>
<dbReference type="EMBL" id="AF258569">
    <property type="protein sequence ID" value="AAG23772.1"/>
    <property type="status" value="ALT_FRAME"/>
    <property type="molecule type" value="mRNA"/>
</dbReference>
<dbReference type="CCDS" id="CCDS7014.1">
    <molecule id="Q969U6-1"/>
</dbReference>
<dbReference type="PIR" id="T46483">
    <property type="entry name" value="T46483"/>
</dbReference>
<dbReference type="RefSeq" id="NP_061871.1">
    <molecule id="Q969U6-1"/>
    <property type="nucleotide sequence ID" value="NM_018998.4"/>
</dbReference>
<dbReference type="BioGRID" id="119967">
    <property type="interactions" value="191"/>
</dbReference>
<dbReference type="ComplexPortal" id="CPX-7762">
    <property type="entry name" value="SCF E3 ubiquitin ligase complex, FBXW5 variant"/>
</dbReference>
<dbReference type="DIP" id="DIP-37971N"/>
<dbReference type="FunCoup" id="Q969U6">
    <property type="interactions" value="419"/>
</dbReference>
<dbReference type="IntAct" id="Q969U6">
    <property type="interactions" value="124"/>
</dbReference>
<dbReference type="MINT" id="Q969U6"/>
<dbReference type="STRING" id="9606.ENSP00000313034"/>
<dbReference type="BindingDB" id="Q969U6"/>
<dbReference type="GlyGen" id="Q969U6">
    <property type="glycosylation" value="2 sites, 1 N-linked glycan (1 site), 1 O-linked glycan (1 site)"/>
</dbReference>
<dbReference type="iPTMnet" id="Q969U6"/>
<dbReference type="PhosphoSitePlus" id="Q969U6"/>
<dbReference type="BioMuta" id="FBXW5"/>
<dbReference type="DMDM" id="44887886"/>
<dbReference type="jPOST" id="Q969U6"/>
<dbReference type="MassIVE" id="Q969U6"/>
<dbReference type="PaxDb" id="9606-ENSP00000313034"/>
<dbReference type="PeptideAtlas" id="Q969U6"/>
<dbReference type="ProteomicsDB" id="75846">
    <molecule id="Q969U6-1"/>
</dbReference>
<dbReference type="ProteomicsDB" id="75847">
    <molecule id="Q969U6-2"/>
</dbReference>
<dbReference type="Pumba" id="Q969U6"/>
<dbReference type="Antibodypedia" id="32276">
    <property type="antibodies" value="157 antibodies from 23 providers"/>
</dbReference>
<dbReference type="DNASU" id="54461"/>
<dbReference type="Ensembl" id="ENST00000325285.8">
    <molecule id="Q969U6-1"/>
    <property type="protein sequence ID" value="ENSP00000313034.3"/>
    <property type="gene ID" value="ENSG00000159069.14"/>
</dbReference>
<dbReference type="GeneID" id="54461"/>
<dbReference type="KEGG" id="hsa:54461"/>
<dbReference type="MANE-Select" id="ENST00000325285.8">
    <property type="protein sequence ID" value="ENSP00000313034.3"/>
    <property type="RefSeq nucleotide sequence ID" value="NM_018998.4"/>
    <property type="RefSeq protein sequence ID" value="NP_061871.1"/>
</dbReference>
<dbReference type="UCSC" id="uc004cjx.4">
    <molecule id="Q969U6-1"/>
    <property type="organism name" value="human"/>
</dbReference>
<dbReference type="AGR" id="HGNC:13613"/>
<dbReference type="CTD" id="54461"/>
<dbReference type="DisGeNET" id="54461"/>
<dbReference type="GeneCards" id="FBXW5"/>
<dbReference type="HGNC" id="HGNC:13613">
    <property type="gene designation" value="FBXW5"/>
</dbReference>
<dbReference type="HPA" id="ENSG00000159069">
    <property type="expression patterns" value="Tissue enhanced (testis)"/>
</dbReference>
<dbReference type="MIM" id="609072">
    <property type="type" value="gene"/>
</dbReference>
<dbReference type="neXtProt" id="NX_Q969U6"/>
<dbReference type="OpenTargets" id="ENSG00000159069"/>
<dbReference type="PharmGKB" id="PA134928070"/>
<dbReference type="VEuPathDB" id="HostDB:ENSG00000159069"/>
<dbReference type="eggNOG" id="ENOG502QTGQ">
    <property type="taxonomic scope" value="Eukaryota"/>
</dbReference>
<dbReference type="GeneTree" id="ENSGT00730000111276"/>
<dbReference type="HOGENOM" id="CLU_021121_0_0_1"/>
<dbReference type="InParanoid" id="Q969U6"/>
<dbReference type="OMA" id="NPRDSEM"/>
<dbReference type="OrthoDB" id="192402at2759"/>
<dbReference type="PAN-GO" id="Q969U6">
    <property type="GO annotations" value="0 GO annotations based on evolutionary models"/>
</dbReference>
<dbReference type="PhylomeDB" id="Q969U6"/>
<dbReference type="TreeFam" id="TF324320"/>
<dbReference type="PathwayCommons" id="Q969U6"/>
<dbReference type="Reactome" id="R-HSA-390471">
    <property type="pathway name" value="Association of TriC/CCT with target proteins during biosynthesis"/>
</dbReference>
<dbReference type="Reactome" id="R-HSA-8951664">
    <property type="pathway name" value="Neddylation"/>
</dbReference>
<dbReference type="Reactome" id="R-HSA-983168">
    <property type="pathway name" value="Antigen processing: Ubiquitination &amp; Proteasome degradation"/>
</dbReference>
<dbReference type="SignaLink" id="Q969U6"/>
<dbReference type="SIGNOR" id="Q969U6"/>
<dbReference type="UniPathway" id="UPA00143"/>
<dbReference type="BioGRID-ORCS" id="54461">
    <property type="hits" value="19 hits in 1192 CRISPR screens"/>
</dbReference>
<dbReference type="ChiTaRS" id="FBXW5">
    <property type="organism name" value="human"/>
</dbReference>
<dbReference type="GeneWiki" id="FBXW5"/>
<dbReference type="GenomeRNAi" id="54461"/>
<dbReference type="Pharos" id="Q969U6">
    <property type="development level" value="Tbio"/>
</dbReference>
<dbReference type="PRO" id="PR:Q969U6"/>
<dbReference type="Proteomes" id="UP000005640">
    <property type="component" value="Chromosome 9"/>
</dbReference>
<dbReference type="RNAct" id="Q969U6">
    <property type="molecule type" value="protein"/>
</dbReference>
<dbReference type="Bgee" id="ENSG00000159069">
    <property type="expression patterns" value="Expressed in right testis and 149 other cell types or tissues"/>
</dbReference>
<dbReference type="ExpressionAtlas" id="Q969U6">
    <property type="expression patterns" value="baseline and differential"/>
</dbReference>
<dbReference type="GO" id="GO:0080008">
    <property type="term" value="C:Cul4-RING E3 ubiquitin ligase complex"/>
    <property type="evidence" value="ECO:0000314"/>
    <property type="project" value="UniProtKB"/>
</dbReference>
<dbReference type="GO" id="GO:0005737">
    <property type="term" value="C:cytoplasm"/>
    <property type="evidence" value="ECO:0000314"/>
    <property type="project" value="UniProtKB"/>
</dbReference>
<dbReference type="GO" id="GO:0005829">
    <property type="term" value="C:cytosol"/>
    <property type="evidence" value="ECO:0000304"/>
    <property type="project" value="Reactome"/>
</dbReference>
<dbReference type="GO" id="GO:0019005">
    <property type="term" value="C:SCF ubiquitin ligase complex"/>
    <property type="evidence" value="ECO:0000314"/>
    <property type="project" value="UniProtKB"/>
</dbReference>
<dbReference type="GO" id="GO:0019901">
    <property type="term" value="F:protein kinase binding"/>
    <property type="evidence" value="ECO:0000353"/>
    <property type="project" value="UniProtKB"/>
</dbReference>
<dbReference type="GO" id="GO:0043161">
    <property type="term" value="P:proteasome-mediated ubiquitin-dependent protein catabolic process"/>
    <property type="evidence" value="ECO:0000314"/>
    <property type="project" value="UniProtKB"/>
</dbReference>
<dbReference type="GO" id="GO:0016567">
    <property type="term" value="P:protein ubiquitination"/>
    <property type="evidence" value="ECO:0000314"/>
    <property type="project" value="UniProtKB"/>
</dbReference>
<dbReference type="GO" id="GO:0010824">
    <property type="term" value="P:regulation of centrosome duplication"/>
    <property type="evidence" value="ECO:0000315"/>
    <property type="project" value="UniProtKB"/>
</dbReference>
<dbReference type="GO" id="GO:0007088">
    <property type="term" value="P:regulation of mitotic nuclear division"/>
    <property type="evidence" value="ECO:0007669"/>
    <property type="project" value="Ensembl"/>
</dbReference>
<dbReference type="GO" id="GO:0031146">
    <property type="term" value="P:SCF-dependent proteasomal ubiquitin-dependent protein catabolic process"/>
    <property type="evidence" value="ECO:0000314"/>
    <property type="project" value="UniProtKB"/>
</dbReference>
<dbReference type="CDD" id="cd22132">
    <property type="entry name" value="F-box_FBXW5"/>
    <property type="match status" value="1"/>
</dbReference>
<dbReference type="FunFam" id="1.20.1280.50:FF:000032">
    <property type="entry name" value="F-box/WD repeat-containing protein 5 isoform X1"/>
    <property type="match status" value="1"/>
</dbReference>
<dbReference type="FunFam" id="2.130.10.10:FF:000305">
    <property type="entry name" value="F-box/WD repeat-containing protein 5 isoform X1"/>
    <property type="match status" value="1"/>
</dbReference>
<dbReference type="FunFam" id="2.130.10.10:FF:000335">
    <property type="entry name" value="F-box/WD repeat-containing protein 5 isoform X1"/>
    <property type="match status" value="1"/>
</dbReference>
<dbReference type="Gene3D" id="1.20.1280.50">
    <property type="match status" value="1"/>
</dbReference>
<dbReference type="Gene3D" id="2.130.10.10">
    <property type="entry name" value="YVTN repeat-like/Quinoprotein amine dehydrogenase"/>
    <property type="match status" value="2"/>
</dbReference>
<dbReference type="InterPro" id="IPR036047">
    <property type="entry name" value="F-box-like_dom_sf"/>
</dbReference>
<dbReference type="InterPro" id="IPR001810">
    <property type="entry name" value="F-box_dom"/>
</dbReference>
<dbReference type="InterPro" id="IPR042508">
    <property type="entry name" value="FBXW5"/>
</dbReference>
<dbReference type="InterPro" id="IPR015943">
    <property type="entry name" value="WD40/YVTN_repeat-like_dom_sf"/>
</dbReference>
<dbReference type="InterPro" id="IPR036322">
    <property type="entry name" value="WD40_repeat_dom_sf"/>
</dbReference>
<dbReference type="InterPro" id="IPR001680">
    <property type="entry name" value="WD40_rpt"/>
</dbReference>
<dbReference type="PANTHER" id="PTHR20995">
    <property type="entry name" value="F-BOX/WD REPEAT-CONTAINING PROTEIN 5"/>
    <property type="match status" value="1"/>
</dbReference>
<dbReference type="PANTHER" id="PTHR20995:SF17">
    <property type="entry name" value="F-BOX_WD REPEAT-CONTAINING PROTEIN 5"/>
    <property type="match status" value="1"/>
</dbReference>
<dbReference type="Pfam" id="PF12937">
    <property type="entry name" value="F-box-like"/>
    <property type="match status" value="1"/>
</dbReference>
<dbReference type="Pfam" id="PF00400">
    <property type="entry name" value="WD40"/>
    <property type="match status" value="2"/>
</dbReference>
<dbReference type="SMART" id="SM00256">
    <property type="entry name" value="FBOX"/>
    <property type="match status" value="1"/>
</dbReference>
<dbReference type="SMART" id="SM00320">
    <property type="entry name" value="WD40"/>
    <property type="match status" value="3"/>
</dbReference>
<dbReference type="SUPFAM" id="SSF81383">
    <property type="entry name" value="F-box domain"/>
    <property type="match status" value="1"/>
</dbReference>
<dbReference type="SUPFAM" id="SSF50978">
    <property type="entry name" value="WD40 repeat-like"/>
    <property type="match status" value="1"/>
</dbReference>
<dbReference type="PROSITE" id="PS50181">
    <property type="entry name" value="FBOX"/>
    <property type="match status" value="1"/>
</dbReference>
<dbReference type="PROSITE" id="PS50082">
    <property type="entry name" value="WD_REPEATS_2"/>
    <property type="match status" value="2"/>
</dbReference>
<dbReference type="PROSITE" id="PS50294">
    <property type="entry name" value="WD_REPEATS_REGION"/>
    <property type="match status" value="2"/>
</dbReference>
<reference key="1">
    <citation type="journal article" date="2004" name="Nat. Genet.">
        <title>Complete sequencing and characterization of 21,243 full-length human cDNAs.</title>
        <authorList>
            <person name="Ota T."/>
            <person name="Suzuki Y."/>
            <person name="Nishikawa T."/>
            <person name="Otsuki T."/>
            <person name="Sugiyama T."/>
            <person name="Irie R."/>
            <person name="Wakamatsu A."/>
            <person name="Hayashi K."/>
            <person name="Sato H."/>
            <person name="Nagai K."/>
            <person name="Kimura K."/>
            <person name="Makita H."/>
            <person name="Sekine M."/>
            <person name="Obayashi M."/>
            <person name="Nishi T."/>
            <person name="Shibahara T."/>
            <person name="Tanaka T."/>
            <person name="Ishii S."/>
            <person name="Yamamoto J."/>
            <person name="Saito K."/>
            <person name="Kawai Y."/>
            <person name="Isono Y."/>
            <person name="Nakamura Y."/>
            <person name="Nagahari K."/>
            <person name="Murakami K."/>
            <person name="Yasuda T."/>
            <person name="Iwayanagi T."/>
            <person name="Wagatsuma M."/>
            <person name="Shiratori A."/>
            <person name="Sudo H."/>
            <person name="Hosoiri T."/>
            <person name="Kaku Y."/>
            <person name="Kodaira H."/>
            <person name="Kondo H."/>
            <person name="Sugawara M."/>
            <person name="Takahashi M."/>
            <person name="Kanda K."/>
            <person name="Yokoi T."/>
            <person name="Furuya T."/>
            <person name="Kikkawa E."/>
            <person name="Omura Y."/>
            <person name="Abe K."/>
            <person name="Kamihara K."/>
            <person name="Katsuta N."/>
            <person name="Sato K."/>
            <person name="Tanikawa M."/>
            <person name="Yamazaki M."/>
            <person name="Ninomiya K."/>
            <person name="Ishibashi T."/>
            <person name="Yamashita H."/>
            <person name="Murakawa K."/>
            <person name="Fujimori K."/>
            <person name="Tanai H."/>
            <person name="Kimata M."/>
            <person name="Watanabe M."/>
            <person name="Hiraoka S."/>
            <person name="Chiba Y."/>
            <person name="Ishida S."/>
            <person name="Ono Y."/>
            <person name="Takiguchi S."/>
            <person name="Watanabe S."/>
            <person name="Yosida M."/>
            <person name="Hotuta T."/>
            <person name="Kusano J."/>
            <person name="Kanehori K."/>
            <person name="Takahashi-Fujii A."/>
            <person name="Hara H."/>
            <person name="Tanase T.-O."/>
            <person name="Nomura Y."/>
            <person name="Togiya S."/>
            <person name="Komai F."/>
            <person name="Hara R."/>
            <person name="Takeuchi K."/>
            <person name="Arita M."/>
            <person name="Imose N."/>
            <person name="Musashino K."/>
            <person name="Yuuki H."/>
            <person name="Oshima A."/>
            <person name="Sasaki N."/>
            <person name="Aotsuka S."/>
            <person name="Yoshikawa Y."/>
            <person name="Matsunawa H."/>
            <person name="Ichihara T."/>
            <person name="Shiohata N."/>
            <person name="Sano S."/>
            <person name="Moriya S."/>
            <person name="Momiyama H."/>
            <person name="Satoh N."/>
            <person name="Takami S."/>
            <person name="Terashima Y."/>
            <person name="Suzuki O."/>
            <person name="Nakagawa S."/>
            <person name="Senoh A."/>
            <person name="Mizoguchi H."/>
            <person name="Goto Y."/>
            <person name="Shimizu F."/>
            <person name="Wakebe H."/>
            <person name="Hishigaki H."/>
            <person name="Watanabe T."/>
            <person name="Sugiyama A."/>
            <person name="Takemoto M."/>
            <person name="Kawakami B."/>
            <person name="Yamazaki M."/>
            <person name="Watanabe K."/>
            <person name="Kumagai A."/>
            <person name="Itakura S."/>
            <person name="Fukuzumi Y."/>
            <person name="Fujimori Y."/>
            <person name="Komiyama M."/>
            <person name="Tashiro H."/>
            <person name="Tanigami A."/>
            <person name="Fujiwara T."/>
            <person name="Ono T."/>
            <person name="Yamada K."/>
            <person name="Fujii Y."/>
            <person name="Ozaki K."/>
            <person name="Hirao M."/>
            <person name="Ohmori Y."/>
            <person name="Kawabata A."/>
            <person name="Hikiji T."/>
            <person name="Kobatake N."/>
            <person name="Inagaki H."/>
            <person name="Ikema Y."/>
            <person name="Okamoto S."/>
            <person name="Okitani R."/>
            <person name="Kawakami T."/>
            <person name="Noguchi S."/>
            <person name="Itoh T."/>
            <person name="Shigeta K."/>
            <person name="Senba T."/>
            <person name="Matsumura K."/>
            <person name="Nakajima Y."/>
            <person name="Mizuno T."/>
            <person name="Morinaga M."/>
            <person name="Sasaki M."/>
            <person name="Togashi T."/>
            <person name="Oyama M."/>
            <person name="Hata H."/>
            <person name="Watanabe M."/>
            <person name="Komatsu T."/>
            <person name="Mizushima-Sugano J."/>
            <person name="Satoh T."/>
            <person name="Shirai Y."/>
            <person name="Takahashi Y."/>
            <person name="Nakagawa K."/>
            <person name="Okumura K."/>
            <person name="Nagase T."/>
            <person name="Nomura N."/>
            <person name="Kikuchi H."/>
            <person name="Masuho Y."/>
            <person name="Yamashita R."/>
            <person name="Nakai K."/>
            <person name="Yada T."/>
            <person name="Nakamura Y."/>
            <person name="Ohara O."/>
            <person name="Isogai T."/>
            <person name="Sugano S."/>
        </authorList>
    </citation>
    <scope>NUCLEOTIDE SEQUENCE [LARGE SCALE MRNA] (ISOFORM 1)</scope>
</reference>
<reference key="2">
    <citation type="journal article" date="2004" name="Nature">
        <title>DNA sequence and analysis of human chromosome 9.</title>
        <authorList>
            <person name="Humphray S.J."/>
            <person name="Oliver K."/>
            <person name="Hunt A.R."/>
            <person name="Plumb R.W."/>
            <person name="Loveland J.E."/>
            <person name="Howe K.L."/>
            <person name="Andrews T.D."/>
            <person name="Searle S."/>
            <person name="Hunt S.E."/>
            <person name="Scott C.E."/>
            <person name="Jones M.C."/>
            <person name="Ainscough R."/>
            <person name="Almeida J.P."/>
            <person name="Ambrose K.D."/>
            <person name="Ashwell R.I.S."/>
            <person name="Babbage A.K."/>
            <person name="Babbage S."/>
            <person name="Bagguley C.L."/>
            <person name="Bailey J."/>
            <person name="Banerjee R."/>
            <person name="Barker D.J."/>
            <person name="Barlow K.F."/>
            <person name="Bates K."/>
            <person name="Beasley H."/>
            <person name="Beasley O."/>
            <person name="Bird C.P."/>
            <person name="Bray-Allen S."/>
            <person name="Brown A.J."/>
            <person name="Brown J.Y."/>
            <person name="Burford D."/>
            <person name="Burrill W."/>
            <person name="Burton J."/>
            <person name="Carder C."/>
            <person name="Carter N.P."/>
            <person name="Chapman J.C."/>
            <person name="Chen Y."/>
            <person name="Clarke G."/>
            <person name="Clark S.Y."/>
            <person name="Clee C.M."/>
            <person name="Clegg S."/>
            <person name="Collier R.E."/>
            <person name="Corby N."/>
            <person name="Crosier M."/>
            <person name="Cummings A.T."/>
            <person name="Davies J."/>
            <person name="Dhami P."/>
            <person name="Dunn M."/>
            <person name="Dutta I."/>
            <person name="Dyer L.W."/>
            <person name="Earthrowl M.E."/>
            <person name="Faulkner L."/>
            <person name="Fleming C.J."/>
            <person name="Frankish A."/>
            <person name="Frankland J.A."/>
            <person name="French L."/>
            <person name="Fricker D.G."/>
            <person name="Garner P."/>
            <person name="Garnett J."/>
            <person name="Ghori J."/>
            <person name="Gilbert J.G.R."/>
            <person name="Glison C."/>
            <person name="Grafham D.V."/>
            <person name="Gribble S."/>
            <person name="Griffiths C."/>
            <person name="Griffiths-Jones S."/>
            <person name="Grocock R."/>
            <person name="Guy J."/>
            <person name="Hall R.E."/>
            <person name="Hammond S."/>
            <person name="Harley J.L."/>
            <person name="Harrison E.S.I."/>
            <person name="Hart E.A."/>
            <person name="Heath P.D."/>
            <person name="Henderson C.D."/>
            <person name="Hopkins B.L."/>
            <person name="Howard P.J."/>
            <person name="Howden P.J."/>
            <person name="Huckle E."/>
            <person name="Johnson C."/>
            <person name="Johnson D."/>
            <person name="Joy A.A."/>
            <person name="Kay M."/>
            <person name="Keenan S."/>
            <person name="Kershaw J.K."/>
            <person name="Kimberley A.M."/>
            <person name="King A."/>
            <person name="Knights A."/>
            <person name="Laird G.K."/>
            <person name="Langford C."/>
            <person name="Lawlor S."/>
            <person name="Leongamornlert D.A."/>
            <person name="Leversha M."/>
            <person name="Lloyd C."/>
            <person name="Lloyd D.M."/>
            <person name="Lovell J."/>
            <person name="Martin S."/>
            <person name="Mashreghi-Mohammadi M."/>
            <person name="Matthews L."/>
            <person name="McLaren S."/>
            <person name="McLay K.E."/>
            <person name="McMurray A."/>
            <person name="Milne S."/>
            <person name="Nickerson T."/>
            <person name="Nisbett J."/>
            <person name="Nordsiek G."/>
            <person name="Pearce A.V."/>
            <person name="Peck A.I."/>
            <person name="Porter K.M."/>
            <person name="Pandian R."/>
            <person name="Pelan S."/>
            <person name="Phillimore B."/>
            <person name="Povey S."/>
            <person name="Ramsey Y."/>
            <person name="Rand V."/>
            <person name="Scharfe M."/>
            <person name="Sehra H.K."/>
            <person name="Shownkeen R."/>
            <person name="Sims S.K."/>
            <person name="Skuce C.D."/>
            <person name="Smith M."/>
            <person name="Steward C.A."/>
            <person name="Swarbreck D."/>
            <person name="Sycamore N."/>
            <person name="Tester J."/>
            <person name="Thorpe A."/>
            <person name="Tracey A."/>
            <person name="Tromans A."/>
            <person name="Thomas D.W."/>
            <person name="Wall M."/>
            <person name="Wallis J.M."/>
            <person name="West A.P."/>
            <person name="Whitehead S.L."/>
            <person name="Willey D.L."/>
            <person name="Williams S.A."/>
            <person name="Wilming L."/>
            <person name="Wray P.W."/>
            <person name="Young L."/>
            <person name="Ashurst J.L."/>
            <person name="Coulson A."/>
            <person name="Blocker H."/>
            <person name="Durbin R.M."/>
            <person name="Sulston J.E."/>
            <person name="Hubbard T."/>
            <person name="Jackson M.J."/>
            <person name="Bentley D.R."/>
            <person name="Beck S."/>
            <person name="Rogers J."/>
            <person name="Dunham I."/>
        </authorList>
    </citation>
    <scope>NUCLEOTIDE SEQUENCE [LARGE SCALE GENOMIC DNA]</scope>
</reference>
<reference key="3">
    <citation type="submission" date="2005-07" db="EMBL/GenBank/DDBJ databases">
        <authorList>
            <person name="Mural R.J."/>
            <person name="Istrail S."/>
            <person name="Sutton G.G."/>
            <person name="Florea L."/>
            <person name="Halpern A.L."/>
            <person name="Mobarry C.M."/>
            <person name="Lippert R."/>
            <person name="Walenz B."/>
            <person name="Shatkay H."/>
            <person name="Dew I."/>
            <person name="Miller J.R."/>
            <person name="Flanigan M.J."/>
            <person name="Edwards N.J."/>
            <person name="Bolanos R."/>
            <person name="Fasulo D."/>
            <person name="Halldorsson B.V."/>
            <person name="Hannenhalli S."/>
            <person name="Turner R."/>
            <person name="Yooseph S."/>
            <person name="Lu F."/>
            <person name="Nusskern D.R."/>
            <person name="Shue B.C."/>
            <person name="Zheng X.H."/>
            <person name="Zhong F."/>
            <person name="Delcher A.L."/>
            <person name="Huson D.H."/>
            <person name="Kravitz S.A."/>
            <person name="Mouchard L."/>
            <person name="Reinert K."/>
            <person name="Remington K.A."/>
            <person name="Clark A.G."/>
            <person name="Waterman M.S."/>
            <person name="Eichler E.E."/>
            <person name="Adams M.D."/>
            <person name="Hunkapiller M.W."/>
            <person name="Myers E.W."/>
            <person name="Venter J.C."/>
        </authorList>
    </citation>
    <scope>NUCLEOTIDE SEQUENCE [LARGE SCALE GENOMIC DNA]</scope>
</reference>
<reference key="4">
    <citation type="journal article" date="2004" name="Genome Res.">
        <title>The status, quality, and expansion of the NIH full-length cDNA project: the Mammalian Gene Collection (MGC).</title>
        <authorList>
            <consortium name="The MGC Project Team"/>
        </authorList>
    </citation>
    <scope>NUCLEOTIDE SEQUENCE [LARGE SCALE MRNA] (ISOFORM 1)</scope>
    <source>
        <tissue>Cervix</tissue>
        <tissue>Colon</tissue>
        <tissue>Ovary</tissue>
        <tissue>Placenta</tissue>
        <tissue>Skin</tissue>
    </source>
</reference>
<reference key="5">
    <citation type="submission" date="2005-03" db="EMBL/GenBank/DDBJ databases">
        <title>Homo sapiens protein coding cDNA.</title>
        <authorList>
            <person name="Totoki Y."/>
            <person name="Toyoda A."/>
            <person name="Takeda T."/>
            <person name="Sakaki Y."/>
            <person name="Tanaka A."/>
            <person name="Yokoyama S."/>
            <person name="Ohara O."/>
            <person name="Nagase T."/>
            <person name="Kikuno R.F."/>
        </authorList>
    </citation>
    <scope>NUCLEOTIDE SEQUENCE [LARGE SCALE MRNA] OF 136-566 (ISOFORM 1)</scope>
    <source>
        <tissue>Brain</tissue>
    </source>
</reference>
<reference key="6">
    <citation type="journal article" date="2007" name="BMC Genomics">
        <title>The full-ORF clone resource of the German cDNA consortium.</title>
        <authorList>
            <person name="Bechtel S."/>
            <person name="Rosenfelder H."/>
            <person name="Duda A."/>
            <person name="Schmidt C.P."/>
            <person name="Ernst U."/>
            <person name="Wellenreuther R."/>
            <person name="Mehrle A."/>
            <person name="Schuster C."/>
            <person name="Bahr A."/>
            <person name="Bloecker H."/>
            <person name="Heubner D."/>
            <person name="Hoerlein A."/>
            <person name="Michel G."/>
            <person name="Wedler H."/>
            <person name="Koehrer K."/>
            <person name="Ottenwaelder B."/>
            <person name="Poustka A."/>
            <person name="Wiemann S."/>
            <person name="Schupp I."/>
        </authorList>
    </citation>
    <scope>NUCLEOTIDE SEQUENCE [LARGE SCALE MRNA] OF 186-566 (ISOFORM 2)</scope>
    <source>
        <tissue>Testis</tissue>
    </source>
</reference>
<reference key="7">
    <citation type="journal article" date="2004" name="Proc. Natl. Acad. Sci. U.S.A.">
        <title>Large-scale cDNA transfection screening for genes related to cancer development and progression.</title>
        <authorList>
            <person name="Wan D."/>
            <person name="Gong Y."/>
            <person name="Qin W."/>
            <person name="Zhang P."/>
            <person name="Li J."/>
            <person name="Wei L."/>
            <person name="Zhou X."/>
            <person name="Li H."/>
            <person name="Qiu X."/>
            <person name="Zhong F."/>
            <person name="He L."/>
            <person name="Yu J."/>
            <person name="Yao G."/>
            <person name="Jiang H."/>
            <person name="Qian L."/>
            <person name="Yu Y."/>
            <person name="Shu H."/>
            <person name="Chen X."/>
            <person name="Xu H."/>
            <person name="Guo M."/>
            <person name="Pan Z."/>
            <person name="Chen Y."/>
            <person name="Ge C."/>
            <person name="Yang S."/>
            <person name="Gu J."/>
        </authorList>
    </citation>
    <scope>NUCLEOTIDE SEQUENCE [LARGE SCALE MRNA] OF 219-566 (ISOFORM 1)</scope>
</reference>
<reference key="8">
    <citation type="journal article" date="2008" name="Genes Dev.">
        <title>WD40 protein FBW5 promotes ubiquitination of tumor suppressor TSC2 by DDB1-CUL4-ROC1 ligase.</title>
        <authorList>
            <person name="Hu J."/>
            <person name="Zacharek S."/>
            <person name="He Y.J."/>
            <person name="Lee H."/>
            <person name="Shumway S."/>
            <person name="Duronio R.J."/>
            <person name="Xiong Y."/>
        </authorList>
    </citation>
    <scope>FUNCTION</scope>
    <scope>INTERACTION WITH TSC1 AND TSC2</scope>
    <scope>IDENTIFICATION IN A DCX PROTEIN LIGASE COMPLEX</scope>
</reference>
<reference key="9">
    <citation type="journal article" date="2009" name="Biochem. Biophys. Res. Commun.">
        <title>An F-box protein, FBXW5, negatively regulates TAK1 MAP3K in the IL-1beta signaling pathway.</title>
        <authorList>
            <person name="Minoda Y."/>
            <person name="Sakurai H."/>
            <person name="Kobayashi T."/>
            <person name="Yoshimura A."/>
            <person name="Takaesu G."/>
        </authorList>
    </citation>
    <scope>FUNCTION</scope>
</reference>
<reference key="10">
    <citation type="journal article" date="2011" name="Nat. Cell Biol.">
        <title>The SCF-FBXW5 E3-ubiquitin ligase is regulated by PLK4 and targets HsSAS-6 to control centrosome duplication.</title>
        <authorList>
            <person name="Puklowski A."/>
            <person name="Homsi Y."/>
            <person name="Keller D."/>
            <person name="May M."/>
            <person name="Chauhan S."/>
            <person name="Kossatz U."/>
            <person name="Grunwald V."/>
            <person name="Kubicka S."/>
            <person name="Pich A."/>
            <person name="Manns M.P."/>
            <person name="Hoffmann I."/>
            <person name="Gonczy P."/>
            <person name="Malek N.P."/>
        </authorList>
    </citation>
    <scope>FUNCTION</scope>
    <scope>SUBCELLULAR LOCATION</scope>
    <scope>INTERACTION WITH SASS6 AND CDC20</scope>
    <scope>IDENTIFICATION IN A SCF PROTEIN LIGASE COMPLEX</scope>
    <scope>DEVELOPMENTAL STAGE</scope>
    <scope>UBIQUITINATION</scope>
    <scope>PHOSPHORYLATION AT SER-151</scope>
    <scope>MUTAGENESIS OF SER-151</scope>
</reference>
<reference key="11">
    <citation type="journal article" date="2013" name="J. Proteome Res.">
        <title>Toward a comprehensive characterization of a human cancer cell phosphoproteome.</title>
        <authorList>
            <person name="Zhou H."/>
            <person name="Di Palma S."/>
            <person name="Preisinger C."/>
            <person name="Peng M."/>
            <person name="Polat A.N."/>
            <person name="Heck A.J."/>
            <person name="Mohammed S."/>
        </authorList>
    </citation>
    <scope>PHOSPHORYLATION [LARGE SCALE ANALYSIS] AT SER-284</scope>
    <scope>IDENTIFICATION BY MASS SPECTROMETRY [LARGE SCALE ANALYSIS]</scope>
    <source>
        <tissue>Cervix carcinoma</tissue>
        <tissue>Erythroleukemia</tissue>
    </source>
</reference>
<organism>
    <name type="scientific">Homo sapiens</name>
    <name type="common">Human</name>
    <dbReference type="NCBI Taxonomy" id="9606"/>
    <lineage>
        <taxon>Eukaryota</taxon>
        <taxon>Metazoa</taxon>
        <taxon>Chordata</taxon>
        <taxon>Craniata</taxon>
        <taxon>Vertebrata</taxon>
        <taxon>Euteleostomi</taxon>
        <taxon>Mammalia</taxon>
        <taxon>Eutheria</taxon>
        <taxon>Euarchontoglires</taxon>
        <taxon>Primates</taxon>
        <taxon>Haplorrhini</taxon>
        <taxon>Catarrhini</taxon>
        <taxon>Hominidae</taxon>
        <taxon>Homo</taxon>
    </lineage>
</organism>
<keyword id="KW-0025">Alternative splicing</keyword>
<keyword id="KW-0963">Cytoplasm</keyword>
<keyword id="KW-0597">Phosphoprotein</keyword>
<keyword id="KW-1267">Proteomics identification</keyword>
<keyword id="KW-1185">Reference proteome</keyword>
<keyword id="KW-0677">Repeat</keyword>
<keyword id="KW-0832">Ubl conjugation</keyword>
<keyword id="KW-0833">Ubl conjugation pathway</keyword>
<keyword id="KW-0853">WD repeat</keyword>
<accession>Q969U6</accession>
<accession>B2RDZ6</accession>
<accession>Q59ET5</accession>
<accession>Q5SPZ8</accession>
<accession>Q5SPZ9</accession>
<accession>Q5SQ00</accession>
<accession>Q5SQ02</accession>
<accession>Q5SQ03</accession>
<accession>Q5SQ04</accession>
<accession>Q8WY79</accession>
<accession>Q96GJ6</accession>
<accession>Q9BSU8</accession>
<accession>Q9H6A8</accession>
<accession>Q9HBQ6</accession>
<accession>Q9NSZ3</accession>
<gene>
    <name type="primary">FBXW5</name>
    <name type="synonym">FBW5</name>
    <name type="ORF">PP3971</name>
</gene>